<evidence type="ECO:0000255" key="1"/>
<evidence type="ECO:0000255" key="2">
    <source>
        <dbReference type="HAMAP-Rule" id="MF_01231"/>
    </source>
</evidence>
<evidence type="ECO:0000305" key="3"/>
<evidence type="ECO:0007829" key="4">
    <source>
        <dbReference type="PDB" id="3WI7"/>
    </source>
</evidence>
<gene>
    <name evidence="2" type="primary">dhaA</name>
    <name type="synonym">dha</name>
    <name type="ordered locus">Atu6064</name>
    <name type="ORF">AGR_pTi_130</name>
</gene>
<proteinExistence type="evidence at protein level"/>
<name>DHAA_AGRFC</name>
<accession>Q8U671</accession>
<dbReference type="EC" id="3.8.1.5" evidence="2"/>
<dbReference type="EMBL" id="AE007871">
    <property type="protein sequence ID" value="AAK91024.2"/>
    <property type="status" value="ALT_INIT"/>
    <property type="molecule type" value="Genomic_DNA"/>
</dbReference>
<dbReference type="PIR" id="AF3235">
    <property type="entry name" value="AF3235"/>
</dbReference>
<dbReference type="RefSeq" id="NP_396583.2">
    <property type="nucleotide sequence ID" value="NC_003065.3"/>
</dbReference>
<dbReference type="PDB" id="3WI7">
    <property type="method" value="X-ray"/>
    <property type="resolution" value="1.70 A"/>
    <property type="chains" value="A/B=1-304"/>
</dbReference>
<dbReference type="PDB" id="3WIB">
    <property type="method" value="X-ray"/>
    <property type="resolution" value="1.95 A"/>
    <property type="chains" value="A/B=1-304"/>
</dbReference>
<dbReference type="PDBsum" id="3WI7"/>
<dbReference type="PDBsum" id="3WIB"/>
<dbReference type="SMR" id="Q8U671"/>
<dbReference type="ESTHER" id="agrtu-DHAA">
    <property type="family name" value="Haloalkane_dehalogenase-HLD2"/>
</dbReference>
<dbReference type="EnsemblBacteria" id="AAK91024">
    <property type="protein sequence ID" value="AAK91024"/>
    <property type="gene ID" value="Atu6064"/>
</dbReference>
<dbReference type="KEGG" id="atu:Atu6064"/>
<dbReference type="PATRIC" id="fig|176299.10.peg.5271"/>
<dbReference type="HOGENOM" id="CLU_020336_13_3_5"/>
<dbReference type="OrthoDB" id="9812774at2"/>
<dbReference type="BRENDA" id="3.8.1.5">
    <property type="organism ID" value="200"/>
</dbReference>
<dbReference type="EvolutionaryTrace" id="Q8U671"/>
<dbReference type="Proteomes" id="UP000000813">
    <property type="component" value="Plasmid Ti"/>
</dbReference>
<dbReference type="GO" id="GO:0018786">
    <property type="term" value="F:haloalkane dehalogenase activity"/>
    <property type="evidence" value="ECO:0007669"/>
    <property type="project" value="UniProtKB-UniRule"/>
</dbReference>
<dbReference type="Gene3D" id="3.40.50.1820">
    <property type="entry name" value="alpha/beta hydrolase"/>
    <property type="match status" value="1"/>
</dbReference>
<dbReference type="HAMAP" id="MF_01231">
    <property type="entry name" value="Haloalk_dehal_type2"/>
    <property type="match status" value="1"/>
</dbReference>
<dbReference type="InterPro" id="IPR000073">
    <property type="entry name" value="AB_hydrolase_1"/>
</dbReference>
<dbReference type="InterPro" id="IPR029058">
    <property type="entry name" value="AB_hydrolase_fold"/>
</dbReference>
<dbReference type="InterPro" id="IPR023594">
    <property type="entry name" value="Haloalkane_dehalogenase_2"/>
</dbReference>
<dbReference type="NCBIfam" id="NF002938">
    <property type="entry name" value="PRK03592.1"/>
    <property type="match status" value="1"/>
</dbReference>
<dbReference type="PANTHER" id="PTHR43329">
    <property type="entry name" value="EPOXIDE HYDROLASE"/>
    <property type="match status" value="1"/>
</dbReference>
<dbReference type="Pfam" id="PF00561">
    <property type="entry name" value="Abhydrolase_1"/>
    <property type="match status" value="1"/>
</dbReference>
<dbReference type="SUPFAM" id="SSF53474">
    <property type="entry name" value="alpha/beta-Hydrolases"/>
    <property type="match status" value="1"/>
</dbReference>
<geneLocation type="plasmid">
    <name>pTiC58</name>
</geneLocation>
<organism>
    <name type="scientific">Agrobacterium fabrum (strain C58 / ATCC 33970)</name>
    <name type="common">Agrobacterium tumefaciens (strain C58)</name>
    <dbReference type="NCBI Taxonomy" id="176299"/>
    <lineage>
        <taxon>Bacteria</taxon>
        <taxon>Pseudomonadati</taxon>
        <taxon>Pseudomonadota</taxon>
        <taxon>Alphaproteobacteria</taxon>
        <taxon>Hyphomicrobiales</taxon>
        <taxon>Rhizobiaceae</taxon>
        <taxon>Rhizobium/Agrobacterium group</taxon>
        <taxon>Agrobacterium</taxon>
        <taxon>Agrobacterium tumefaciens complex</taxon>
    </lineage>
</organism>
<sequence length="304" mass="34390">MKEHRHMTEKSPHSAFGDGAKAYDVPAFGLQIHTVEHGSGAPIVFLHGNPTSSYLWRHIFRRLHGHGRLLAVDLIGYGQSSKPDIEYTLENQQRYVDAWFDALDLRNVTLVLQDYGAAFGLNWASRNPDRVRAVAFFEPVLRNIDSVDLSPEFVTRRAKLRQPGEGEIFVQQENRFLTELFPWFFLTPLAPEDLRQYQTPFPTPHSRKAILAGPRNLPVDGEPASTVAFLEQAVNWLNTSDTPKLLLTFKPGFLLTDAILKWSQVTIRNLEIEAAGAGIHFVQEEQPETIARLLDAWLTRIAGN</sequence>
<reference key="1">
    <citation type="journal article" date="2001" name="Science">
        <title>The genome of the natural genetic engineer Agrobacterium tumefaciens C58.</title>
        <authorList>
            <person name="Wood D.W."/>
            <person name="Setubal J.C."/>
            <person name="Kaul R."/>
            <person name="Monks D.E."/>
            <person name="Kitajima J.P."/>
            <person name="Okura V.K."/>
            <person name="Zhou Y."/>
            <person name="Chen L."/>
            <person name="Wood G.E."/>
            <person name="Almeida N.F. Jr."/>
            <person name="Woo L."/>
            <person name="Chen Y."/>
            <person name="Paulsen I.T."/>
            <person name="Eisen J.A."/>
            <person name="Karp P.D."/>
            <person name="Bovee D. Sr."/>
            <person name="Chapman P."/>
            <person name="Clendenning J."/>
            <person name="Deatherage G."/>
            <person name="Gillet W."/>
            <person name="Grant C."/>
            <person name="Kutyavin T."/>
            <person name="Levy R."/>
            <person name="Li M.-J."/>
            <person name="McClelland E."/>
            <person name="Palmieri A."/>
            <person name="Raymond C."/>
            <person name="Rouse G."/>
            <person name="Saenphimmachak C."/>
            <person name="Wu Z."/>
            <person name="Romero P."/>
            <person name="Gordon D."/>
            <person name="Zhang S."/>
            <person name="Yoo H."/>
            <person name="Tao Y."/>
            <person name="Biddle P."/>
            <person name="Jung M."/>
            <person name="Krespan W."/>
            <person name="Perry M."/>
            <person name="Gordon-Kamm B."/>
            <person name="Liao L."/>
            <person name="Kim S."/>
            <person name="Hendrick C."/>
            <person name="Zhao Z.-Y."/>
            <person name="Dolan M."/>
            <person name="Chumley F."/>
            <person name="Tingey S.V."/>
            <person name="Tomb J.-F."/>
            <person name="Gordon M.P."/>
            <person name="Olson M.V."/>
            <person name="Nester E.W."/>
        </authorList>
    </citation>
    <scope>NUCLEOTIDE SEQUENCE [LARGE SCALE GENOMIC DNA]</scope>
</reference>
<reference key="2">
    <citation type="journal article" date="2001" name="Science">
        <title>Genome sequence of the plant pathogen and biotechnology agent Agrobacterium tumefaciens C58.</title>
        <authorList>
            <person name="Goodner B."/>
            <person name="Hinkle G."/>
            <person name="Gattung S."/>
            <person name="Miller N."/>
            <person name="Blanchard M."/>
            <person name="Qurollo B."/>
            <person name="Goldman B.S."/>
            <person name="Cao Y."/>
            <person name="Askenazi M."/>
            <person name="Halling C."/>
            <person name="Mullin L."/>
            <person name="Houmiel K."/>
            <person name="Gordon J."/>
            <person name="Vaudin M."/>
            <person name="Iartchouk O."/>
            <person name="Epp A."/>
            <person name="Liu F."/>
            <person name="Wollam C."/>
            <person name="Allinger M."/>
            <person name="Doughty D."/>
            <person name="Scott C."/>
            <person name="Lappas C."/>
            <person name="Markelz B."/>
            <person name="Flanagan C."/>
            <person name="Crowell C."/>
            <person name="Gurson J."/>
            <person name="Lomo C."/>
            <person name="Sear C."/>
            <person name="Strub G."/>
            <person name="Cielo C."/>
            <person name="Slater S."/>
        </authorList>
    </citation>
    <scope>NUCLEOTIDE SEQUENCE [LARGE SCALE GENOMIC DNA]</scope>
    <source>
        <strain>C58 / ATCC 33970</strain>
    </source>
</reference>
<keyword id="KW-0002">3D-structure</keyword>
<keyword id="KW-0378">Hydrolase</keyword>
<keyword id="KW-0614">Plasmid</keyword>
<keyword id="KW-1185">Reference proteome</keyword>
<protein>
    <recommendedName>
        <fullName evidence="2">Haloalkane dehalogenase</fullName>
        <ecNumber evidence="2">3.8.1.5</ecNumber>
    </recommendedName>
</protein>
<comment type="function">
    <text evidence="2">Catalyzes hydrolytic cleavage of carbon-halogen bonds in halogenated aliphatic compounds, leading to the formation of the corresponding primary alcohols, halide ions and protons.</text>
</comment>
<comment type="catalytic activity">
    <reaction evidence="2">
        <text>1-haloalkane + H2O = a halide anion + a primary alcohol + H(+)</text>
        <dbReference type="Rhea" id="RHEA:19081"/>
        <dbReference type="ChEBI" id="CHEBI:15377"/>
        <dbReference type="ChEBI" id="CHEBI:15378"/>
        <dbReference type="ChEBI" id="CHEBI:15734"/>
        <dbReference type="ChEBI" id="CHEBI:16042"/>
        <dbReference type="ChEBI" id="CHEBI:18060"/>
        <dbReference type="EC" id="3.8.1.5"/>
    </reaction>
</comment>
<comment type="subunit">
    <text evidence="2">Monomer.</text>
</comment>
<comment type="similarity">
    <text evidence="2">Belongs to the haloalkane dehalogenase family. Type 2 subfamily.</text>
</comment>
<comment type="sequence caution" evidence="3">
    <conflict type="erroneous initiation">
        <sequence resource="EMBL-CDS" id="AAK91024"/>
    </conflict>
</comment>
<feature type="chain" id="PRO_0000216779" description="Haloalkane dehalogenase">
    <location>
        <begin position="1"/>
        <end position="304"/>
    </location>
</feature>
<feature type="domain" description="AB hydrolase-1" evidence="1">
    <location>
        <begin position="42"/>
        <end position="154"/>
    </location>
</feature>
<feature type="active site" description="Nucleophile" evidence="2">
    <location>
        <position position="114"/>
    </location>
</feature>
<feature type="active site" description="Proton donor" evidence="2">
    <location>
        <position position="138"/>
    </location>
</feature>
<feature type="active site" description="Proton acceptor" evidence="2">
    <location>
        <position position="280"/>
    </location>
</feature>
<feature type="helix" evidence="4">
    <location>
        <begin position="14"/>
        <end position="16"/>
    </location>
</feature>
<feature type="strand" evidence="4">
    <location>
        <begin position="21"/>
        <end position="27"/>
    </location>
</feature>
<feature type="strand" evidence="4">
    <location>
        <begin position="30"/>
        <end position="37"/>
    </location>
</feature>
<feature type="strand" evidence="4">
    <location>
        <begin position="40"/>
        <end position="46"/>
    </location>
</feature>
<feature type="helix" evidence="4">
    <location>
        <begin position="53"/>
        <end position="56"/>
    </location>
</feature>
<feature type="helix" evidence="4">
    <location>
        <begin position="57"/>
        <end position="62"/>
    </location>
</feature>
<feature type="turn" evidence="4">
    <location>
        <begin position="63"/>
        <end position="65"/>
    </location>
</feature>
<feature type="strand" evidence="4">
    <location>
        <begin position="66"/>
        <end position="72"/>
    </location>
</feature>
<feature type="helix" evidence="4">
    <location>
        <begin position="89"/>
        <end position="103"/>
    </location>
</feature>
<feature type="strand" evidence="4">
    <location>
        <begin position="107"/>
        <end position="114"/>
    </location>
</feature>
<feature type="helix" evidence="4">
    <location>
        <begin position="116"/>
        <end position="126"/>
    </location>
</feature>
<feature type="helix" evidence="4">
    <location>
        <begin position="128"/>
        <end position="130"/>
    </location>
</feature>
<feature type="strand" evidence="4">
    <location>
        <begin position="131"/>
        <end position="139"/>
    </location>
</feature>
<feature type="helix" evidence="4">
    <location>
        <begin position="146"/>
        <end position="148"/>
    </location>
</feature>
<feature type="helix" evidence="4">
    <location>
        <begin position="151"/>
        <end position="160"/>
    </location>
</feature>
<feature type="helix" evidence="4">
    <location>
        <begin position="165"/>
        <end position="170"/>
    </location>
</feature>
<feature type="helix" evidence="4">
    <location>
        <begin position="175"/>
        <end position="178"/>
    </location>
</feature>
<feature type="helix" evidence="4">
    <location>
        <begin position="180"/>
        <end position="183"/>
    </location>
</feature>
<feature type="helix" evidence="4">
    <location>
        <begin position="191"/>
        <end position="198"/>
    </location>
</feature>
<feature type="helix" evidence="4">
    <location>
        <begin position="205"/>
        <end position="207"/>
    </location>
</feature>
<feature type="helix" evidence="4">
    <location>
        <begin position="208"/>
        <end position="216"/>
    </location>
</feature>
<feature type="helix" evidence="4">
    <location>
        <begin position="224"/>
        <end position="231"/>
    </location>
</feature>
<feature type="helix" evidence="4">
    <location>
        <begin position="234"/>
        <end position="239"/>
    </location>
</feature>
<feature type="strand" evidence="4">
    <location>
        <begin position="244"/>
        <end position="251"/>
    </location>
</feature>
<feature type="strand" evidence="4">
    <location>
        <begin position="253"/>
        <end position="255"/>
    </location>
</feature>
<feature type="helix" evidence="4">
    <location>
        <begin position="257"/>
        <end position="266"/>
    </location>
</feature>
<feature type="strand" evidence="4">
    <location>
        <begin position="270"/>
        <end position="280"/>
    </location>
</feature>
<feature type="helix" evidence="4">
    <location>
        <begin position="282"/>
        <end position="285"/>
    </location>
</feature>
<feature type="helix" evidence="4">
    <location>
        <begin position="287"/>
        <end position="301"/>
    </location>
</feature>